<comment type="function">
    <text evidence="1">Part of the multicomponent 3-phenylpropionate dioxygenase. Converts 3-phenylpropionic acid (PP) and cinnamic acid (CI) into 3-phenylpropionate-dihydrodiol (PP-dihydrodiol) and cinnamic acid-dihydrodiol (CI-dihydrodiol), respectively.</text>
</comment>
<comment type="catalytic activity">
    <reaction evidence="1">
        <text>3-phenylpropanoate + NADH + O2 + H(+) = 3-(cis-5,6-dihydroxycyclohexa-1,3-dien-1-yl)propanoate + NAD(+)</text>
        <dbReference type="Rhea" id="RHEA:20357"/>
        <dbReference type="ChEBI" id="CHEBI:15378"/>
        <dbReference type="ChEBI" id="CHEBI:15379"/>
        <dbReference type="ChEBI" id="CHEBI:51057"/>
        <dbReference type="ChEBI" id="CHEBI:57540"/>
        <dbReference type="ChEBI" id="CHEBI:57945"/>
        <dbReference type="ChEBI" id="CHEBI:60087"/>
        <dbReference type="EC" id="1.14.12.19"/>
    </reaction>
</comment>
<comment type="catalytic activity">
    <reaction evidence="1">
        <text>(E)-cinnamate + NADH + O2 + H(+) = (2E)-3-(cis-5,6-dihydroxycyclohexa-1,3-dien-1-yl)prop-2-enoate + NAD(+)</text>
        <dbReference type="Rhea" id="RHEA:25058"/>
        <dbReference type="ChEBI" id="CHEBI:15378"/>
        <dbReference type="ChEBI" id="CHEBI:15379"/>
        <dbReference type="ChEBI" id="CHEBI:15669"/>
        <dbReference type="ChEBI" id="CHEBI:57540"/>
        <dbReference type="ChEBI" id="CHEBI:57945"/>
        <dbReference type="ChEBI" id="CHEBI:61451"/>
        <dbReference type="EC" id="1.14.12.19"/>
    </reaction>
</comment>
<comment type="pathway">
    <text evidence="1">Aromatic compound metabolism; 3-phenylpropanoate degradation.</text>
</comment>
<comment type="subunit">
    <text evidence="1">This dioxygenase system consists of four proteins: the two subunits of the hydroxylase component (HcaE and HcaF), a ferredoxin (HcaC) and a ferredoxin reductase (HcaD).</text>
</comment>
<comment type="similarity">
    <text evidence="1">Belongs to the bacterial ring-hydroxylating dioxygenase beta subunit family.</text>
</comment>
<feature type="chain" id="PRO_1000186972" description="3-phenylpropionate/cinnamic acid dioxygenase subunit beta">
    <location>
        <begin position="1"/>
        <end position="172"/>
    </location>
</feature>
<keyword id="KW-0058">Aromatic hydrocarbons catabolism</keyword>
<keyword id="KW-0223">Dioxygenase</keyword>
<keyword id="KW-0520">NAD</keyword>
<keyword id="KW-0560">Oxidoreductase</keyword>
<keyword id="KW-1185">Reference proteome</keyword>
<protein>
    <recommendedName>
        <fullName evidence="1">3-phenylpropionate/cinnamic acid dioxygenase subunit beta</fullName>
        <ecNumber evidence="1">1.14.12.19</ecNumber>
    </recommendedName>
</protein>
<sequence length="172" mass="20579">MSAQVSLELHHRISQFLFHEASLLDDWKFRDWLAQLDEEIRYTMRTTVNAQTRDRRKGVQPPTTWIFNDTKDQLERRIARLETGMAWAEEPPSRTRHLISNCQISETDIPNVFAVRVNYLLYRAQKERDETFYVGTRFDKVRRLEDDNWRLLERDIVLDQAVITSHNLSVLF</sequence>
<proteinExistence type="inferred from homology"/>
<gene>
    <name evidence="1" type="primary">hcaF</name>
    <name type="ordered locus">EC55989_2825</name>
</gene>
<name>HCAF_ECO55</name>
<evidence type="ECO:0000255" key="1">
    <source>
        <dbReference type="HAMAP-Rule" id="MF_01649"/>
    </source>
</evidence>
<reference key="1">
    <citation type="journal article" date="2009" name="PLoS Genet.">
        <title>Organised genome dynamics in the Escherichia coli species results in highly diverse adaptive paths.</title>
        <authorList>
            <person name="Touchon M."/>
            <person name="Hoede C."/>
            <person name="Tenaillon O."/>
            <person name="Barbe V."/>
            <person name="Baeriswyl S."/>
            <person name="Bidet P."/>
            <person name="Bingen E."/>
            <person name="Bonacorsi S."/>
            <person name="Bouchier C."/>
            <person name="Bouvet O."/>
            <person name="Calteau A."/>
            <person name="Chiapello H."/>
            <person name="Clermont O."/>
            <person name="Cruveiller S."/>
            <person name="Danchin A."/>
            <person name="Diard M."/>
            <person name="Dossat C."/>
            <person name="Karoui M.E."/>
            <person name="Frapy E."/>
            <person name="Garry L."/>
            <person name="Ghigo J.M."/>
            <person name="Gilles A.M."/>
            <person name="Johnson J."/>
            <person name="Le Bouguenec C."/>
            <person name="Lescat M."/>
            <person name="Mangenot S."/>
            <person name="Martinez-Jehanne V."/>
            <person name="Matic I."/>
            <person name="Nassif X."/>
            <person name="Oztas S."/>
            <person name="Petit M.A."/>
            <person name="Pichon C."/>
            <person name="Rouy Z."/>
            <person name="Ruf C.S."/>
            <person name="Schneider D."/>
            <person name="Tourret J."/>
            <person name="Vacherie B."/>
            <person name="Vallenet D."/>
            <person name="Medigue C."/>
            <person name="Rocha E.P.C."/>
            <person name="Denamur E."/>
        </authorList>
    </citation>
    <scope>NUCLEOTIDE SEQUENCE [LARGE SCALE GENOMIC DNA]</scope>
    <source>
        <strain>55989 / EAEC</strain>
    </source>
</reference>
<dbReference type="EC" id="1.14.12.19" evidence="1"/>
<dbReference type="EMBL" id="CU928145">
    <property type="protein sequence ID" value="CAU98697.1"/>
    <property type="molecule type" value="Genomic_DNA"/>
</dbReference>
<dbReference type="RefSeq" id="WP_001276072.1">
    <property type="nucleotide sequence ID" value="NC_011748.1"/>
</dbReference>
<dbReference type="SMR" id="B7LDD1"/>
<dbReference type="GeneID" id="75206232"/>
<dbReference type="KEGG" id="eck:EC55989_2825"/>
<dbReference type="HOGENOM" id="CLU_102527_1_1_6"/>
<dbReference type="UniPathway" id="UPA00714"/>
<dbReference type="Proteomes" id="UP000000746">
    <property type="component" value="Chromosome"/>
</dbReference>
<dbReference type="GO" id="GO:0008695">
    <property type="term" value="F:3-phenylpropionate dioxygenase activity"/>
    <property type="evidence" value="ECO:0007669"/>
    <property type="project" value="UniProtKB-UniRule"/>
</dbReference>
<dbReference type="GO" id="GO:0019380">
    <property type="term" value="P:3-phenylpropionate catabolic process"/>
    <property type="evidence" value="ECO:0007669"/>
    <property type="project" value="UniProtKB-UniRule"/>
</dbReference>
<dbReference type="CDD" id="cd00667">
    <property type="entry name" value="ring_hydroxylating_dioxygenases_beta"/>
    <property type="match status" value="1"/>
</dbReference>
<dbReference type="FunFam" id="3.10.450.50:FF:000008">
    <property type="entry name" value="3-phenylpropionate/cinnamic acid dioxygenase subunit beta"/>
    <property type="match status" value="1"/>
</dbReference>
<dbReference type="Gene3D" id="3.10.450.50">
    <property type="match status" value="1"/>
</dbReference>
<dbReference type="HAMAP" id="MF_01649">
    <property type="entry name" value="HcaF"/>
    <property type="match status" value="1"/>
</dbReference>
<dbReference type="InterPro" id="IPR054881">
    <property type="entry name" value="3PPDioc_HcaF"/>
</dbReference>
<dbReference type="InterPro" id="IPR023712">
    <property type="entry name" value="HcaF"/>
</dbReference>
<dbReference type="InterPro" id="IPR032710">
    <property type="entry name" value="NTF2-like_dom_sf"/>
</dbReference>
<dbReference type="InterPro" id="IPR000391">
    <property type="entry name" value="Rng_hydr_dOase-bsu"/>
</dbReference>
<dbReference type="NCBIfam" id="NF042947">
    <property type="entry name" value="3PPDioc_HcaF"/>
    <property type="match status" value="1"/>
</dbReference>
<dbReference type="NCBIfam" id="NF007479">
    <property type="entry name" value="PRK10069.1"/>
    <property type="match status" value="1"/>
</dbReference>
<dbReference type="PANTHER" id="PTHR41534:SF2">
    <property type="entry name" value="3-PHENYLPROPIONATE_CINNAMIC ACID DIOXYGENASE SUBUNIT BETA"/>
    <property type="match status" value="1"/>
</dbReference>
<dbReference type="PANTHER" id="PTHR41534">
    <property type="entry name" value="BLR3401 PROTEIN"/>
    <property type="match status" value="1"/>
</dbReference>
<dbReference type="Pfam" id="PF00866">
    <property type="entry name" value="Ring_hydroxyl_B"/>
    <property type="match status" value="1"/>
</dbReference>
<dbReference type="SUPFAM" id="SSF54427">
    <property type="entry name" value="NTF2-like"/>
    <property type="match status" value="1"/>
</dbReference>
<organism>
    <name type="scientific">Escherichia coli (strain 55989 / EAEC)</name>
    <dbReference type="NCBI Taxonomy" id="585055"/>
    <lineage>
        <taxon>Bacteria</taxon>
        <taxon>Pseudomonadati</taxon>
        <taxon>Pseudomonadota</taxon>
        <taxon>Gammaproteobacteria</taxon>
        <taxon>Enterobacterales</taxon>
        <taxon>Enterobacteriaceae</taxon>
        <taxon>Escherichia</taxon>
    </lineage>
</organism>
<accession>B7LDD1</accession>